<comment type="function">
    <text evidence="2">Exhibits racemase activity for both L-glutamate and L-aspartate, but has threefold higher activity for L-glutamate than L-aspartate. Cannot use D-glutamate or D-aspartate as substrate.</text>
</comment>
<comment type="catalytic activity">
    <reaction evidence="2">
        <text>L-glutamate = D-glutamate</text>
        <dbReference type="Rhea" id="RHEA:12813"/>
        <dbReference type="ChEBI" id="CHEBI:29985"/>
        <dbReference type="ChEBI" id="CHEBI:29986"/>
        <dbReference type="EC" id="5.1.1.3"/>
    </reaction>
    <physiologicalReaction direction="left-to-right" evidence="2">
        <dbReference type="Rhea" id="RHEA:12814"/>
    </physiologicalReaction>
</comment>
<comment type="catalytic activity">
    <reaction evidence="2">
        <text>L-aspartate = D-aspartate</text>
        <dbReference type="Rhea" id="RHEA:14973"/>
        <dbReference type="ChEBI" id="CHEBI:29990"/>
        <dbReference type="ChEBI" id="CHEBI:29991"/>
        <dbReference type="EC" id="5.1.1.13"/>
    </reaction>
    <physiologicalReaction direction="left-to-right" evidence="2">
        <dbReference type="Rhea" id="RHEA:14974"/>
    </physiologicalReaction>
</comment>
<comment type="subunit">
    <text evidence="2">Homodimer.</text>
</comment>
<comment type="interaction">
    <interactant intactId="EBI-11476557">
        <id>A0A140N890</id>
    </interactant>
    <interactant intactId="EBI-11476557">
        <id>A0A140N890</id>
        <label>ygeA</label>
    </interactant>
    <organismsDiffer>false</organismsDiffer>
    <experiments>2</experiments>
</comment>
<comment type="similarity">
    <text evidence="4">Belongs to the aspartate/glutamate racemases family.</text>
</comment>
<gene>
    <name evidence="1" type="primary">ygeA</name>
    <name evidence="6" type="ordered locus">ECBD_0884</name>
</gene>
<evidence type="ECO:0000250" key="1">
    <source>
        <dbReference type="UniProtKB" id="A0A0H3JGH6"/>
    </source>
</evidence>
<evidence type="ECO:0000269" key="2">
    <source>
    </source>
</evidence>
<evidence type="ECO:0000303" key="3">
    <source>
    </source>
</evidence>
<evidence type="ECO:0000305" key="4"/>
<evidence type="ECO:0000305" key="5">
    <source>
    </source>
</evidence>
<evidence type="ECO:0000312" key="6">
    <source>
        <dbReference type="EMBL" id="ACT27951.1"/>
    </source>
</evidence>
<evidence type="ECO:0007744" key="7">
    <source>
        <dbReference type="PDB" id="5ELL"/>
    </source>
</evidence>
<evidence type="ECO:0007744" key="8">
    <source>
        <dbReference type="PDB" id="5ELM"/>
    </source>
</evidence>
<evidence type="ECO:0007829" key="9">
    <source>
        <dbReference type="PDB" id="5ELL"/>
    </source>
</evidence>
<dbReference type="EC" id="5.1.1.13" evidence="2"/>
<dbReference type="EC" id="5.1.1.3" evidence="2"/>
<dbReference type="EMBL" id="CP001665">
    <property type="protein sequence ID" value="ACT27951.1"/>
    <property type="molecule type" value="Genomic_DNA"/>
</dbReference>
<dbReference type="RefSeq" id="WP_000848664.1">
    <property type="nucleotide sequence ID" value="NZ_JADXDS010000040.1"/>
</dbReference>
<dbReference type="PDB" id="5ELL">
    <property type="method" value="X-ray"/>
    <property type="resolution" value="1.80 A"/>
    <property type="chains" value="A/B=1-230"/>
</dbReference>
<dbReference type="PDB" id="5ELM">
    <property type="method" value="X-ray"/>
    <property type="resolution" value="2.00 A"/>
    <property type="chains" value="A/B/C/D=1-230"/>
</dbReference>
<dbReference type="PDBsum" id="5ELL"/>
<dbReference type="PDBsum" id="5ELM"/>
<dbReference type="SMR" id="A0A140N890"/>
<dbReference type="MINT" id="A0A140N890"/>
<dbReference type="GeneID" id="93779156"/>
<dbReference type="KEGG" id="ebd:ECBD_0884"/>
<dbReference type="KEGG" id="ebe:B21_02649"/>
<dbReference type="KEGG" id="ebl:ECD_02688"/>
<dbReference type="PATRIC" id="fig|469008.15.peg.2722"/>
<dbReference type="eggNOG" id="COG1794">
    <property type="taxonomic scope" value="Bacteria"/>
</dbReference>
<dbReference type="HOGENOM" id="CLU_055360_1_0_6"/>
<dbReference type="GO" id="GO:0047689">
    <property type="term" value="F:aspartate racemase activity"/>
    <property type="evidence" value="ECO:0007669"/>
    <property type="project" value="UniProtKB-EC"/>
</dbReference>
<dbReference type="GO" id="GO:0008881">
    <property type="term" value="F:glutamate racemase activity"/>
    <property type="evidence" value="ECO:0007669"/>
    <property type="project" value="UniProtKB-EC"/>
</dbReference>
<dbReference type="GO" id="GO:0042802">
    <property type="term" value="F:identical protein binding"/>
    <property type="evidence" value="ECO:0000353"/>
    <property type="project" value="IntAct"/>
</dbReference>
<dbReference type="FunFam" id="3.40.50.1860:FF:000003">
    <property type="entry name" value="Aspartate racemase"/>
    <property type="match status" value="1"/>
</dbReference>
<dbReference type="FunFam" id="3.40.50.1860:FF:000004">
    <property type="entry name" value="Aspartate racemase"/>
    <property type="match status" value="1"/>
</dbReference>
<dbReference type="Gene3D" id="3.40.50.1860">
    <property type="match status" value="2"/>
</dbReference>
<dbReference type="InterPro" id="IPR015942">
    <property type="entry name" value="Asp/Glu/hydantoin_racemase"/>
</dbReference>
<dbReference type="InterPro" id="IPR001920">
    <property type="entry name" value="Asp/Glu_race"/>
</dbReference>
<dbReference type="InterPro" id="IPR018187">
    <property type="entry name" value="Asp/Glu_racemase_AS_1"/>
</dbReference>
<dbReference type="InterPro" id="IPR033134">
    <property type="entry name" value="Asp/Glu_racemase_AS_2"/>
</dbReference>
<dbReference type="InterPro" id="IPR004380">
    <property type="entry name" value="Asp_race"/>
</dbReference>
<dbReference type="NCBIfam" id="TIGR00035">
    <property type="entry name" value="asp_race"/>
    <property type="match status" value="1"/>
</dbReference>
<dbReference type="NCBIfam" id="NF007569">
    <property type="entry name" value="PRK10200.1"/>
    <property type="match status" value="1"/>
</dbReference>
<dbReference type="PANTHER" id="PTHR21198:SF7">
    <property type="entry name" value="ASPARTATE-GLUTAMATE RACEMASE FAMILY"/>
    <property type="match status" value="1"/>
</dbReference>
<dbReference type="PANTHER" id="PTHR21198">
    <property type="entry name" value="GLUTAMATE RACEMASE"/>
    <property type="match status" value="1"/>
</dbReference>
<dbReference type="Pfam" id="PF01177">
    <property type="entry name" value="Asp_Glu_race"/>
    <property type="match status" value="1"/>
</dbReference>
<dbReference type="SUPFAM" id="SSF53681">
    <property type="entry name" value="Aspartate/glutamate racemase"/>
    <property type="match status" value="2"/>
</dbReference>
<dbReference type="PROSITE" id="PS00923">
    <property type="entry name" value="ASP_GLU_RACEMASE_1"/>
    <property type="match status" value="1"/>
</dbReference>
<dbReference type="PROSITE" id="PS00924">
    <property type="entry name" value="ASP_GLU_RACEMASE_2"/>
    <property type="match status" value="1"/>
</dbReference>
<name>YGEA_ECOBD</name>
<accession>A0A140N890</accession>
<reference key="1">
    <citation type="submission" date="2009-07" db="EMBL/GenBank/DDBJ databases">
        <title>Complete sequence of Escherichia coli BL21(DE3).</title>
        <authorList>
            <person name="Lucas S."/>
            <person name="Copeland A."/>
            <person name="Lapidus A."/>
            <person name="Glavina del Rio T."/>
            <person name="Dalin E."/>
            <person name="Tice H."/>
            <person name="Bruce D."/>
            <person name="Goodwin L."/>
            <person name="Pitluck S."/>
            <person name="LaButti K.M."/>
            <person name="Clum A."/>
            <person name="Larimer F."/>
            <person name="Land M."/>
            <person name="Hauser L."/>
            <person name="Kyrpides N."/>
            <person name="Anderson I."/>
            <person name="Sorek R."/>
            <person name="Rubin E."/>
        </authorList>
    </citation>
    <scope>NUCLEOTIDE SEQUENCE [LARGE SCALE GENOMIC DNA]</scope>
    <source>
        <strain>B / BL21-DE3</strain>
    </source>
</reference>
<reference evidence="7 8" key="2">
    <citation type="journal article" date="2015" name="FEBS Lett.">
        <title>Structural basis for an atypical active site of an L-aspartate/glutamate-specific racemase from Escherichia coli.</title>
        <authorList>
            <person name="Ahn J.W."/>
            <person name="Chang J.H."/>
            <person name="Kim K.J."/>
        </authorList>
    </citation>
    <scope>X-RAY CRYSTALLOGRAPHY (1.80 ANGSTROMS) OF APOENZYME AND IN COMPLEX WITH L-GLUTAMIC ACID</scope>
    <scope>FUNCTION</scope>
    <scope>CATALYTIC ACTIVITY</scope>
    <scope>SUBUNIT</scope>
    <scope>MUTAGENESIS OF THR-83 AND CYS-197</scope>
    <scope>ACTIVE SITE</scope>
    <source>
        <strain>B / BL21-DE3</strain>
    </source>
</reference>
<sequence>MKTIGLLGGMSWESTIPYYRLINEGIKQRLGGLHSAQVLLHSVDFHEIEECQRRGEWDKTGDILAEAALGLQRAGAEGIVLCTNTMHKVADAIESRCTLPFLHIADATGRAITGAGMTRVALLGTRYTMEQDFYRGRLTEQFSINCLIPEADERAKINQIIFEELCLGQFTEASRAYYAQVIARLAEQGAQGVIFGCTEIGLLVPEERSVLPVFDTAAIHAEDAVAFMLS</sequence>
<proteinExistence type="evidence at protein level"/>
<feature type="chain" id="PRO_0000447007" description="L-aspartate/glutamate-specific racemase">
    <location>
        <begin position="1"/>
        <end position="230"/>
    </location>
</feature>
<feature type="active site" description="Proton donor" evidence="5">
    <location>
        <position position="83"/>
    </location>
</feature>
<feature type="active site" description="Proton acceptor" evidence="5">
    <location>
        <position position="197"/>
    </location>
</feature>
<feature type="binding site" evidence="2">
    <location>
        <position position="10"/>
    </location>
    <ligand>
        <name>substrate</name>
    </ligand>
</feature>
<feature type="binding site" evidence="2">
    <location>
        <position position="52"/>
    </location>
    <ligand>
        <name>substrate</name>
    </ligand>
</feature>
<feature type="binding site" evidence="2">
    <location>
        <begin position="83"/>
        <end position="85"/>
    </location>
    <ligand>
        <name>substrate</name>
    </ligand>
</feature>
<feature type="binding site" evidence="2">
    <location>
        <begin position="198"/>
        <end position="199"/>
    </location>
    <ligand>
        <name>substrate</name>
    </ligand>
</feature>
<feature type="mutagenesis site" description="Shows bidirectional racemase activity." evidence="2">
    <original>T</original>
    <variation>C</variation>
    <location>
        <position position="83"/>
    </location>
</feature>
<feature type="mutagenesis site" description="Loss of racemase activity." evidence="2">
    <original>C</original>
    <variation>S</variation>
    <location>
        <position position="197"/>
    </location>
</feature>
<feature type="strand" evidence="9">
    <location>
        <begin position="4"/>
        <end position="8"/>
    </location>
</feature>
<feature type="helix" evidence="9">
    <location>
        <begin position="12"/>
        <end position="30"/>
    </location>
</feature>
<feature type="strand" evidence="9">
    <location>
        <begin position="38"/>
        <end position="42"/>
    </location>
</feature>
<feature type="helix" evidence="9">
    <location>
        <begin position="45"/>
        <end position="53"/>
    </location>
</feature>
<feature type="helix" evidence="9">
    <location>
        <begin position="57"/>
        <end position="74"/>
    </location>
</feature>
<feature type="strand" evidence="9">
    <location>
        <begin position="77"/>
        <end position="82"/>
    </location>
</feature>
<feature type="helix" evidence="9">
    <location>
        <begin position="85"/>
        <end position="89"/>
    </location>
</feature>
<feature type="helix" evidence="9">
    <location>
        <begin position="90"/>
        <end position="96"/>
    </location>
</feature>
<feature type="helix" evidence="9">
    <location>
        <begin position="104"/>
        <end position="114"/>
    </location>
</feature>
<feature type="strand" evidence="9">
    <location>
        <begin position="118"/>
        <end position="124"/>
    </location>
</feature>
<feature type="helix" evidence="9">
    <location>
        <begin position="126"/>
        <end position="130"/>
    </location>
</feature>
<feature type="helix" evidence="9">
    <location>
        <begin position="132"/>
        <end position="142"/>
    </location>
</feature>
<feature type="strand" evidence="9">
    <location>
        <begin position="145"/>
        <end position="147"/>
    </location>
</feature>
<feature type="helix" evidence="9">
    <location>
        <begin position="151"/>
        <end position="163"/>
    </location>
</feature>
<feature type="helix" evidence="9">
    <location>
        <begin position="165"/>
        <end position="167"/>
    </location>
</feature>
<feature type="helix" evidence="9">
    <location>
        <begin position="172"/>
        <end position="187"/>
    </location>
</feature>
<feature type="strand" evidence="9">
    <location>
        <begin position="191"/>
        <end position="195"/>
    </location>
</feature>
<feature type="helix" evidence="9">
    <location>
        <begin position="198"/>
        <end position="203"/>
    </location>
</feature>
<feature type="helix" evidence="9">
    <location>
        <begin position="206"/>
        <end position="208"/>
    </location>
</feature>
<feature type="strand" evidence="9">
    <location>
        <begin position="209"/>
        <end position="211"/>
    </location>
</feature>
<feature type="strand" evidence="9">
    <location>
        <begin position="213"/>
        <end position="215"/>
    </location>
</feature>
<feature type="helix" evidence="9">
    <location>
        <begin position="216"/>
        <end position="228"/>
    </location>
</feature>
<organism>
    <name type="scientific">Escherichia coli (strain B / BL21-DE3)</name>
    <dbReference type="NCBI Taxonomy" id="469008"/>
    <lineage>
        <taxon>Bacteria</taxon>
        <taxon>Pseudomonadati</taxon>
        <taxon>Pseudomonadota</taxon>
        <taxon>Gammaproteobacteria</taxon>
        <taxon>Enterobacterales</taxon>
        <taxon>Enterobacteriaceae</taxon>
        <taxon>Escherichia</taxon>
    </lineage>
</organism>
<keyword id="KW-0002">3D-structure</keyword>
<keyword id="KW-0413">Isomerase</keyword>
<protein>
    <recommendedName>
        <fullName evidence="3">L-aspartate/glutamate-specific racemase</fullName>
        <shortName evidence="3">L-Asp/Glu-specific racemase</shortName>
        <ecNumber evidence="2">5.1.1.13</ecNumber>
        <ecNumber evidence="2">5.1.1.3</ecNumber>
    </recommendedName>
    <alternativeName>
        <fullName evidence="3">EcL-DER</fullName>
    </alternativeName>
</protein>